<keyword id="KW-0068">Autocatalytic cleavage</keyword>
<keyword id="KW-0963">Cytoplasm</keyword>
<keyword id="KW-0210">Decarboxylase</keyword>
<keyword id="KW-0456">Lyase</keyword>
<keyword id="KW-0566">Pantothenate biosynthesis</keyword>
<keyword id="KW-0670">Pyruvate</keyword>
<keyword id="KW-0704">Schiff base</keyword>
<keyword id="KW-0865">Zymogen</keyword>
<feature type="chain" id="PRO_1000072349" description="Aspartate 1-decarboxylase beta chain" evidence="1">
    <location>
        <begin position="1"/>
        <end position="24"/>
    </location>
</feature>
<feature type="chain" id="PRO_1000072350" description="Aspartate 1-decarboxylase alpha chain" evidence="1">
    <location>
        <begin position="25"/>
        <end position="126"/>
    </location>
</feature>
<feature type="active site" description="Schiff-base intermediate with substrate; via pyruvic acid" evidence="1">
    <location>
        <position position="25"/>
    </location>
</feature>
<feature type="active site" description="Proton donor" evidence="1">
    <location>
        <position position="58"/>
    </location>
</feature>
<feature type="binding site" evidence="1">
    <location>
        <position position="57"/>
    </location>
    <ligand>
        <name>substrate</name>
    </ligand>
</feature>
<feature type="binding site" evidence="1">
    <location>
        <begin position="72"/>
        <end position="74"/>
    </location>
    <ligand>
        <name>substrate</name>
    </ligand>
</feature>
<feature type="modified residue" description="Pyruvic acid (Ser)" evidence="1">
    <location>
        <position position="25"/>
    </location>
</feature>
<name>PAND_CAMJ8</name>
<reference key="1">
    <citation type="journal article" date="2007" name="J. Bacteriol.">
        <title>The complete genome sequence of Campylobacter jejuni strain 81116 (NCTC11828).</title>
        <authorList>
            <person name="Pearson B.M."/>
            <person name="Gaskin D.J.H."/>
            <person name="Segers R.P.A.M."/>
            <person name="Wells J.M."/>
            <person name="Nuijten P.J.M."/>
            <person name="van Vliet A.H.M."/>
        </authorList>
    </citation>
    <scope>NUCLEOTIDE SEQUENCE [LARGE SCALE GENOMIC DNA]</scope>
    <source>
        <strain>81116 / NCTC 11828</strain>
    </source>
</reference>
<sequence>MNITLLKSKIHRASVTEARLDYIGSISIDEKLLQASGILEYEKVQVVNVNNGARFETYTIATQEEGVVCLNGAAARLAEVGDKVIIMSYADFNEEEAKTFKPKVVFVDENNTATKITNYEKHGAIF</sequence>
<accession>A8FK85</accession>
<organism>
    <name type="scientific">Campylobacter jejuni subsp. jejuni serotype O:6 (strain 81116 / NCTC 11828)</name>
    <dbReference type="NCBI Taxonomy" id="407148"/>
    <lineage>
        <taxon>Bacteria</taxon>
        <taxon>Pseudomonadati</taxon>
        <taxon>Campylobacterota</taxon>
        <taxon>Epsilonproteobacteria</taxon>
        <taxon>Campylobacterales</taxon>
        <taxon>Campylobacteraceae</taxon>
        <taxon>Campylobacter</taxon>
    </lineage>
</organism>
<comment type="function">
    <text evidence="1">Catalyzes the pyruvoyl-dependent decarboxylation of aspartate to produce beta-alanine.</text>
</comment>
<comment type="catalytic activity">
    <reaction evidence="1">
        <text>L-aspartate + H(+) = beta-alanine + CO2</text>
        <dbReference type="Rhea" id="RHEA:19497"/>
        <dbReference type="ChEBI" id="CHEBI:15378"/>
        <dbReference type="ChEBI" id="CHEBI:16526"/>
        <dbReference type="ChEBI" id="CHEBI:29991"/>
        <dbReference type="ChEBI" id="CHEBI:57966"/>
        <dbReference type="EC" id="4.1.1.11"/>
    </reaction>
</comment>
<comment type="cofactor">
    <cofactor evidence="1">
        <name>pyruvate</name>
        <dbReference type="ChEBI" id="CHEBI:15361"/>
    </cofactor>
    <text evidence="1">Binds 1 pyruvoyl group covalently per subunit.</text>
</comment>
<comment type="pathway">
    <text evidence="1">Cofactor biosynthesis; (R)-pantothenate biosynthesis; beta-alanine from L-aspartate: step 1/1.</text>
</comment>
<comment type="subunit">
    <text evidence="1">Heterooctamer of four alpha and four beta subunits.</text>
</comment>
<comment type="subcellular location">
    <subcellularLocation>
        <location evidence="1">Cytoplasm</location>
    </subcellularLocation>
</comment>
<comment type="PTM">
    <text evidence="1">Is synthesized initially as an inactive proenzyme, which is activated by self-cleavage at a specific serine bond to produce a beta-subunit with a hydroxyl group at its C-terminus and an alpha-subunit with a pyruvoyl group at its N-terminus.</text>
</comment>
<comment type="similarity">
    <text evidence="1">Belongs to the PanD family.</text>
</comment>
<gene>
    <name evidence="1" type="primary">panD</name>
    <name type="ordered locus">C8J_0273</name>
</gene>
<proteinExistence type="inferred from homology"/>
<protein>
    <recommendedName>
        <fullName evidence="1">Aspartate 1-decarboxylase</fullName>
        <ecNumber evidence="1">4.1.1.11</ecNumber>
    </recommendedName>
    <alternativeName>
        <fullName evidence="1">Aspartate alpha-decarboxylase</fullName>
    </alternativeName>
    <component>
        <recommendedName>
            <fullName evidence="1">Aspartate 1-decarboxylase beta chain</fullName>
        </recommendedName>
    </component>
    <component>
        <recommendedName>
            <fullName evidence="1">Aspartate 1-decarboxylase alpha chain</fullName>
        </recommendedName>
    </component>
</protein>
<evidence type="ECO:0000255" key="1">
    <source>
        <dbReference type="HAMAP-Rule" id="MF_00446"/>
    </source>
</evidence>
<dbReference type="EC" id="4.1.1.11" evidence="1"/>
<dbReference type="EMBL" id="CP000814">
    <property type="protein sequence ID" value="ABV51872.1"/>
    <property type="molecule type" value="Genomic_DNA"/>
</dbReference>
<dbReference type="RefSeq" id="WP_002857482.1">
    <property type="nucleotide sequence ID" value="NC_009839.1"/>
</dbReference>
<dbReference type="SMR" id="A8FK85"/>
<dbReference type="KEGG" id="cju:C8J_0273"/>
<dbReference type="HOGENOM" id="CLU_115305_2_0_7"/>
<dbReference type="UniPathway" id="UPA00028">
    <property type="reaction ID" value="UER00002"/>
</dbReference>
<dbReference type="GO" id="GO:0005829">
    <property type="term" value="C:cytosol"/>
    <property type="evidence" value="ECO:0007669"/>
    <property type="project" value="TreeGrafter"/>
</dbReference>
<dbReference type="GO" id="GO:0004068">
    <property type="term" value="F:aspartate 1-decarboxylase activity"/>
    <property type="evidence" value="ECO:0007669"/>
    <property type="project" value="UniProtKB-UniRule"/>
</dbReference>
<dbReference type="GO" id="GO:0006523">
    <property type="term" value="P:alanine biosynthetic process"/>
    <property type="evidence" value="ECO:0007669"/>
    <property type="project" value="InterPro"/>
</dbReference>
<dbReference type="GO" id="GO:0015940">
    <property type="term" value="P:pantothenate biosynthetic process"/>
    <property type="evidence" value="ECO:0007669"/>
    <property type="project" value="UniProtKB-UniRule"/>
</dbReference>
<dbReference type="CDD" id="cd06919">
    <property type="entry name" value="Asp_decarbox"/>
    <property type="match status" value="1"/>
</dbReference>
<dbReference type="Gene3D" id="2.40.40.20">
    <property type="match status" value="1"/>
</dbReference>
<dbReference type="HAMAP" id="MF_00446">
    <property type="entry name" value="PanD"/>
    <property type="match status" value="1"/>
</dbReference>
<dbReference type="InterPro" id="IPR009010">
    <property type="entry name" value="Asp_de-COase-like_dom_sf"/>
</dbReference>
<dbReference type="InterPro" id="IPR003190">
    <property type="entry name" value="Asp_decarbox"/>
</dbReference>
<dbReference type="NCBIfam" id="TIGR00223">
    <property type="entry name" value="panD"/>
    <property type="match status" value="1"/>
</dbReference>
<dbReference type="PANTHER" id="PTHR21012">
    <property type="entry name" value="ASPARTATE 1-DECARBOXYLASE"/>
    <property type="match status" value="1"/>
</dbReference>
<dbReference type="PANTHER" id="PTHR21012:SF0">
    <property type="entry name" value="ASPARTATE 1-DECARBOXYLASE"/>
    <property type="match status" value="1"/>
</dbReference>
<dbReference type="Pfam" id="PF02261">
    <property type="entry name" value="Asp_decarbox"/>
    <property type="match status" value="1"/>
</dbReference>
<dbReference type="PIRSF" id="PIRSF006246">
    <property type="entry name" value="Asp_decarbox"/>
    <property type="match status" value="1"/>
</dbReference>
<dbReference type="SUPFAM" id="SSF50692">
    <property type="entry name" value="ADC-like"/>
    <property type="match status" value="1"/>
</dbReference>